<reference key="1">
    <citation type="journal article" date="2007" name="J. Bacteriol.">
        <title>The complete genome sequence of the lactic acid bacterial paradigm Lactococcus lactis subsp. cremoris MG1363.</title>
        <authorList>
            <person name="Wegmann U."/>
            <person name="O'Connell-Motherway M."/>
            <person name="Zomer A."/>
            <person name="Buist G."/>
            <person name="Shearman C."/>
            <person name="Canchaya C."/>
            <person name="Ventura M."/>
            <person name="Goesmann A."/>
            <person name="Gasson M.J."/>
            <person name="Kuipers O.P."/>
            <person name="van Sinderen D."/>
            <person name="Kok J."/>
        </authorList>
    </citation>
    <scope>NUCLEOTIDE SEQUENCE [LARGE SCALE GENOMIC DNA]</scope>
    <source>
        <strain>MG1363</strain>
    </source>
</reference>
<reference key="2">
    <citation type="journal article" date="2011" name="J. Biol. Chem.">
        <title>Quaternary structure and functional unit of energy coupling factor (ECF)-type transporters.</title>
        <authorList>
            <person name="ter Beek J."/>
            <person name="Duurkens R.H."/>
            <person name="Erkens G.B."/>
            <person name="Slotboom D.J."/>
        </authorList>
    </citation>
    <scope>SUBUNIT</scope>
    <scope>SUBCELLULAR LOCATION</scope>
    <scope>EXPRESSION IN E.COLI</scope>
    <source>
        <strain>MG1363</strain>
    </source>
</reference>
<keyword id="KW-1003">Cell membrane</keyword>
<keyword id="KW-0472">Membrane</keyword>
<keyword id="KW-0812">Transmembrane</keyword>
<keyword id="KW-1133">Transmembrane helix</keyword>
<keyword id="KW-0813">Transport</keyword>
<protein>
    <recommendedName>
        <fullName>Biotin transporter BioY2</fullName>
    </recommendedName>
    <alternativeName>
        <fullName>Biotin ECF transporter S component BioY2</fullName>
    </alternativeName>
</protein>
<feature type="chain" id="PRO_0000409005" description="Biotin transporter BioY2">
    <location>
        <begin position="1"/>
        <end position="182"/>
    </location>
</feature>
<feature type="transmembrane region" description="Helical" evidence="1">
    <location>
        <begin position="12"/>
        <end position="32"/>
    </location>
</feature>
<feature type="transmembrane region" description="Helical" evidence="1">
    <location>
        <begin position="54"/>
        <end position="74"/>
    </location>
</feature>
<feature type="transmembrane region" description="Helical" evidence="1">
    <location>
        <begin position="78"/>
        <end position="98"/>
    </location>
</feature>
<feature type="transmembrane region" description="Helical" evidence="1">
    <location>
        <begin position="111"/>
        <end position="131"/>
    </location>
</feature>
<feature type="transmembrane region" description="Helical" evidence="1">
    <location>
        <begin position="150"/>
        <end position="170"/>
    </location>
</feature>
<organism>
    <name type="scientific">Lactococcus lactis subsp. cremoris (strain MG1363)</name>
    <dbReference type="NCBI Taxonomy" id="416870"/>
    <lineage>
        <taxon>Bacteria</taxon>
        <taxon>Bacillati</taxon>
        <taxon>Bacillota</taxon>
        <taxon>Bacilli</taxon>
        <taxon>Lactobacillales</taxon>
        <taxon>Streptococcaceae</taxon>
        <taxon>Lactococcus</taxon>
        <taxon>Lactococcus cremoris subsp. cremoris</taxon>
    </lineage>
</organism>
<evidence type="ECO:0000255" key="1"/>
<evidence type="ECO:0000269" key="2">
    <source>
    </source>
</evidence>
<evidence type="ECO:0000305" key="3"/>
<evidence type="ECO:0000305" key="4">
    <source>
    </source>
</evidence>
<sequence>MQNTKLYSLTLIALGAAIIAVLSPLAIPIGIVPVTLQTLAVGLVATVLKARETFFAILLYLLLGFIGIPVFTGGTSGIAVLFGPTGGFLLAFLVMGTLISWGLHQIKYKTIPAFIINIVGHLLMLVIGTLWLKFFTQVDWSLALKLGFTPFVFVEIIKAILVTIFGLALIRALSHTNKYFTN</sequence>
<proteinExistence type="evidence at protein level"/>
<accession>A2RI45</accession>
<name>BIOY2_LACLM</name>
<dbReference type="EMBL" id="AM406671">
    <property type="protein sequence ID" value="CAL96938.1"/>
    <property type="molecule type" value="Genomic_DNA"/>
</dbReference>
<dbReference type="RefSeq" id="WP_011834394.1">
    <property type="nucleotide sequence ID" value="NC_009004.1"/>
</dbReference>
<dbReference type="SMR" id="A2RI45"/>
<dbReference type="STRING" id="416870.llmg_0332"/>
<dbReference type="KEGG" id="llm:llmg_0332"/>
<dbReference type="eggNOG" id="COG1268">
    <property type="taxonomic scope" value="Bacteria"/>
</dbReference>
<dbReference type="HOGENOM" id="CLU_077931_2_2_9"/>
<dbReference type="OrthoDB" id="9803495at2"/>
<dbReference type="PhylomeDB" id="A2RI45"/>
<dbReference type="Proteomes" id="UP000000364">
    <property type="component" value="Chromosome"/>
</dbReference>
<dbReference type="GO" id="GO:0005886">
    <property type="term" value="C:plasma membrane"/>
    <property type="evidence" value="ECO:0000314"/>
    <property type="project" value="UniProtKB"/>
</dbReference>
<dbReference type="GO" id="GO:0015225">
    <property type="term" value="F:biotin transmembrane transporter activity"/>
    <property type="evidence" value="ECO:0007669"/>
    <property type="project" value="InterPro"/>
</dbReference>
<dbReference type="Gene3D" id="1.10.1760.20">
    <property type="match status" value="1"/>
</dbReference>
<dbReference type="InterPro" id="IPR003784">
    <property type="entry name" value="BioY"/>
</dbReference>
<dbReference type="PANTHER" id="PTHR34295">
    <property type="entry name" value="BIOTIN TRANSPORTER BIOY"/>
    <property type="match status" value="1"/>
</dbReference>
<dbReference type="PANTHER" id="PTHR34295:SF4">
    <property type="entry name" value="BIOTIN TRANSPORTER BIOY-RELATED"/>
    <property type="match status" value="1"/>
</dbReference>
<dbReference type="Pfam" id="PF02632">
    <property type="entry name" value="BioY"/>
    <property type="match status" value="1"/>
</dbReference>
<dbReference type="PIRSF" id="PIRSF016661">
    <property type="entry name" value="BioY"/>
    <property type="match status" value="1"/>
</dbReference>
<gene>
    <name type="primary">bioY2</name>
    <name type="ordered locus">llmg_0332</name>
</gene>
<comment type="function">
    <text>Probably a biotin-binding protein that interacts with the energy-coupling factor (ECF) ABC-transporter complex. Unlike classic ABC transporters this ECF transporter provides the energy necessary to transport a number of different substrates. The substrates themselves are bound by transmembrane, not extracytoplasmic soluble proteins.</text>
</comment>
<comment type="subunit">
    <text evidence="2">In E.coli forms a stable energy-coupling factor (ECF) transporter complex composed of 2 membrane-embedded substrate-binding protein (S component), 2 ATP-binding proteins (A and A' components) and 2 transmembrane proteins (T component), probably with a stoichiometry of 2:1:1:2. May be able to interact with more than 1 S component at a time.</text>
</comment>
<comment type="subcellular location">
    <subcellularLocation>
        <location evidence="4">Cell membrane</location>
        <topology evidence="4">Multi-pass membrane protein</topology>
    </subcellularLocation>
</comment>
<comment type="similarity">
    <text evidence="3">Belongs to the BioY family.</text>
</comment>